<evidence type="ECO:0000255" key="1">
    <source>
        <dbReference type="HAMAP-Rule" id="MF_04066"/>
    </source>
</evidence>
<evidence type="ECO:0000256" key="2">
    <source>
        <dbReference type="SAM" id="MobiDB-lite"/>
    </source>
</evidence>
<sequence length="230" mass="25807">MDSNTLSSFQVDCFLWHVRKQVADQELGDAPFLDRLRRDQKSLKGRGSTLGLNIETATCVGKQIVERILKEESDETFKMTMASALASRYLTDMTIEEMSRDWFMLMPKQKVAGPLCVRMDQAITDKNIILKANFSVIFNRLETLTLLRAFTEEGAIVGEISPLPSLPGHTNEDVKNAIGILIGGLEWNDNTVRVSETLQRFAWRSSNENGGPPLTPTQKRKMAGTIRSEV</sequence>
<reference key="1">
    <citation type="submission" date="2007-02" db="EMBL/GenBank/DDBJ databases">
        <title>The NIAID influenza genome sequencing project.</title>
        <authorList>
            <person name="Ghedin E."/>
            <person name="Spiro D."/>
            <person name="Miller N."/>
            <person name="Zaborsky J."/>
            <person name="Feldblyum T."/>
            <person name="Subbu V."/>
            <person name="Shumway M."/>
            <person name="Sparenborg J."/>
            <person name="Groveman L."/>
            <person name="Halpin R."/>
            <person name="Sitz J."/>
            <person name="Koo H."/>
            <person name="Salzberg S.L."/>
            <person name="Webster R.G."/>
            <person name="Hoffmann E."/>
            <person name="Krauss S."/>
            <person name="Naeve C."/>
            <person name="Bao Y."/>
            <person name="Bolotov P."/>
            <person name="Dernovoy D."/>
            <person name="Kiryutin B."/>
            <person name="Lipman D.J."/>
            <person name="Tatusova T."/>
        </authorList>
    </citation>
    <scope>NUCLEOTIDE SEQUENCE [GENOMIC RNA]</scope>
</reference>
<reference key="2">
    <citation type="submission" date="2007-02" db="EMBL/GenBank/DDBJ databases">
        <authorList>
            <consortium name="The NIAID Influenza Genome Sequencing Consortium"/>
        </authorList>
    </citation>
    <scope>NUCLEOTIDE SEQUENCE [GENOMIC RNA]</scope>
</reference>
<protein>
    <recommendedName>
        <fullName evidence="1">Non-structural protein 1</fullName>
        <shortName evidence="1">NS1</shortName>
    </recommendedName>
    <alternativeName>
        <fullName evidence="1">NS1A</fullName>
    </alternativeName>
</protein>
<organismHost>
    <name type="scientific">Aves</name>
    <dbReference type="NCBI Taxonomy" id="8782"/>
</organismHost>
<organismHost>
    <name type="scientific">Homo sapiens</name>
    <name type="common">Human</name>
    <dbReference type="NCBI Taxonomy" id="9606"/>
</organismHost>
<organismHost>
    <name type="scientific">Sus scrofa</name>
    <name type="common">Pig</name>
    <dbReference type="NCBI Taxonomy" id="9823"/>
</organismHost>
<name>NS1_I96A2</name>
<feature type="chain" id="PRO_0000372991" description="Non-structural protein 1">
    <location>
        <begin position="1"/>
        <end position="230"/>
    </location>
</feature>
<feature type="region of interest" description="RNA-binding and homodimerization" evidence="1">
    <location>
        <begin position="1"/>
        <end position="73"/>
    </location>
</feature>
<feature type="region of interest" description="CPSF4-binding" evidence="1">
    <location>
        <begin position="180"/>
        <end position="215"/>
    </location>
</feature>
<feature type="region of interest" description="Disordered" evidence="2">
    <location>
        <begin position="205"/>
        <end position="230"/>
    </location>
</feature>
<feature type="region of interest" description="PABPN1-binding" evidence="1">
    <location>
        <begin position="223"/>
        <end position="230"/>
    </location>
</feature>
<feature type="short sequence motif" description="Nuclear localization signal" evidence="1">
    <location>
        <begin position="34"/>
        <end position="38"/>
    </location>
</feature>
<feature type="short sequence motif" description="Nuclear export signal" evidence="1">
    <location>
        <begin position="137"/>
        <end position="146"/>
    </location>
</feature>
<proteinExistence type="inferred from homology"/>
<accession>A3DRP6</accession>
<dbReference type="EMBL" id="CY019799">
    <property type="protein sequence ID" value="ABN50967.1"/>
    <property type="molecule type" value="Viral_cRNA"/>
</dbReference>
<dbReference type="SMR" id="A3DRP6"/>
<dbReference type="Proteomes" id="UP000007557">
    <property type="component" value="Genome"/>
</dbReference>
<dbReference type="GO" id="GO:0030430">
    <property type="term" value="C:host cell cytoplasm"/>
    <property type="evidence" value="ECO:0007669"/>
    <property type="project" value="UniProtKB-SubCell"/>
</dbReference>
<dbReference type="GO" id="GO:0042025">
    <property type="term" value="C:host cell nucleus"/>
    <property type="evidence" value="ECO:0007669"/>
    <property type="project" value="UniProtKB-SubCell"/>
</dbReference>
<dbReference type="GO" id="GO:0030291">
    <property type="term" value="F:protein serine/threonine kinase inhibitor activity"/>
    <property type="evidence" value="ECO:0007669"/>
    <property type="project" value="UniProtKB-KW"/>
</dbReference>
<dbReference type="GO" id="GO:0003723">
    <property type="term" value="F:RNA binding"/>
    <property type="evidence" value="ECO:0007669"/>
    <property type="project" value="UniProtKB-KW"/>
</dbReference>
<dbReference type="GO" id="GO:0039540">
    <property type="term" value="P:symbiont-mediated suppression of host cytoplasmic pattern recognition receptor signaling pathway via inhibition of RIG-I activity"/>
    <property type="evidence" value="ECO:0007669"/>
    <property type="project" value="UniProtKB-KW"/>
</dbReference>
<dbReference type="GO" id="GO:0039657">
    <property type="term" value="P:symbiont-mediated suppression of host gene expression"/>
    <property type="evidence" value="ECO:0007669"/>
    <property type="project" value="UniProtKB-KW"/>
</dbReference>
<dbReference type="GO" id="GO:0039524">
    <property type="term" value="P:symbiont-mediated suppression of host mRNA processing"/>
    <property type="evidence" value="ECO:0007669"/>
    <property type="project" value="UniProtKB-KW"/>
</dbReference>
<dbReference type="GO" id="GO:0039580">
    <property type="term" value="P:symbiont-mediated suppression of host PKR/eIFalpha signaling"/>
    <property type="evidence" value="ECO:0007669"/>
    <property type="project" value="UniProtKB-KW"/>
</dbReference>
<dbReference type="GO" id="GO:0039502">
    <property type="term" value="P:symbiont-mediated suppression of host type I interferon-mediated signaling pathway"/>
    <property type="evidence" value="ECO:0007669"/>
    <property type="project" value="UniProtKB-KW"/>
</dbReference>
<dbReference type="FunFam" id="1.10.287.10:FF:000001">
    <property type="entry name" value="Non-structural protein 1"/>
    <property type="match status" value="1"/>
</dbReference>
<dbReference type="FunFam" id="3.30.420.330:FF:000001">
    <property type="entry name" value="Non-structural protein 1"/>
    <property type="match status" value="1"/>
</dbReference>
<dbReference type="Gene3D" id="3.30.420.330">
    <property type="entry name" value="Influenza virus non-structural protein, effector domain"/>
    <property type="match status" value="1"/>
</dbReference>
<dbReference type="Gene3D" id="1.10.287.10">
    <property type="entry name" value="S15/NS1, RNA-binding"/>
    <property type="match status" value="1"/>
</dbReference>
<dbReference type="HAMAP" id="MF_04066">
    <property type="entry name" value="INFV_NS1"/>
    <property type="match status" value="1"/>
</dbReference>
<dbReference type="InterPro" id="IPR004208">
    <property type="entry name" value="NS1"/>
</dbReference>
<dbReference type="InterPro" id="IPR000256">
    <property type="entry name" value="NS1A"/>
</dbReference>
<dbReference type="InterPro" id="IPR038064">
    <property type="entry name" value="NS1A_effect_dom-like_sf"/>
</dbReference>
<dbReference type="InterPro" id="IPR009068">
    <property type="entry name" value="uS15_NS1_RNA-bd_sf"/>
</dbReference>
<dbReference type="Pfam" id="PF00600">
    <property type="entry name" value="Flu_NS1"/>
    <property type="match status" value="1"/>
</dbReference>
<dbReference type="SUPFAM" id="SSF143021">
    <property type="entry name" value="Ns1 effector domain-like"/>
    <property type="match status" value="1"/>
</dbReference>
<dbReference type="SUPFAM" id="SSF47060">
    <property type="entry name" value="S15/NS1 RNA-binding domain"/>
    <property type="match status" value="1"/>
</dbReference>
<comment type="function">
    <text evidence="1">Inhibits post-transcriptional processing of cellular pre-mRNA, by binding and inhibiting two cellular proteins that are required for the 3'-end processing of cellular pre-mRNAs: the 30 kDa cleavage and polyadenylation specificity factor/CPSF4 and the poly(A)-binding protein 2/PABPN1. In turn, unprocessed 3' end pre-mRNAs accumulate in the host nucleus and are no longer exported to the cytoplasm. Cellular protein synthesis is thereby shut off very early after virus infection. Viral protein synthesis is not affected by the inhibition of the cellular 3' end processing machinery because the poly(A) tails of viral mRNAs are produced by the viral polymerase through a stuttering mechanism. Prevents the establishment of the cellular antiviral state by inhibiting TRIM25-mediated RIGI ubiquitination, which normally triggers the antiviral transduction signal that leads to the activation of type I IFN genes by transcription factors IRF3 and IRF7. Also binds poly(A) and U6 snRNA. Inhibits the integrated stress response (ISR) in the infected cell by blocking dsRNA binding by EIF2AK2/PKR and further phosphorylation of EIF2S1/EIF-2ALPHA. Stress granule formation is thus inhibited, which allows protein synthesis and viral replication.</text>
</comment>
<comment type="subunit">
    <text evidence="1">Homodimer. Interacts with host TRIM25 (via coiled coil); this interaction specifically inhibits TRIM25 multimerization and TRIM25-mediated RIGI CARD ubiquitination. Interacts with human EIF2AK2/PKR, CPSF4, IVNS1ABP and PABPN1.</text>
</comment>
<comment type="subcellular location">
    <subcellularLocation>
        <location evidence="1">Host nucleus</location>
    </subcellularLocation>
    <subcellularLocation>
        <location evidence="1">Host cytoplasm</location>
    </subcellularLocation>
    <text evidence="1">In uninfected, transfected cells, NS1 is localized in the nucleus. Only in virus infected cells, the nuclear export signal is unveiled, presumably by a viral protein, and a fraction of NS1 is exported in the cytoplasm.</text>
</comment>
<comment type="alternative products">
    <event type="alternative splicing"/>
    <isoform>
        <id>A3DRP6-1</id>
        <name>NS1</name>
        <sequence type="displayed"/>
    </isoform>
    <isoform>
        <id>A3DRP5-1</id>
        <name>NEP</name>
        <name>NS2</name>
        <sequence type="external"/>
    </isoform>
</comment>
<comment type="domain">
    <text evidence="1">The dsRNA-binding region is required for suppression of RNA silencing.</text>
</comment>
<comment type="PTM">
    <text evidence="1">Upon interferon induction, ISGylated via host HERC5; this results in the impairment of NS1 interaction with RNA targets due to its inability to form homodimers and to interact with host EIF2AK2/PKR.</text>
</comment>
<comment type="similarity">
    <text evidence="1">Belongs to the influenza A viruses NS1 family.</text>
</comment>
<gene>
    <name evidence="1" type="primary">NS</name>
</gene>
<organism>
    <name type="scientific">Influenza A virus (strain A/USA:Memphis/10/1996 H1N1)</name>
    <dbReference type="NCBI Taxonomy" id="416730"/>
    <lineage>
        <taxon>Viruses</taxon>
        <taxon>Riboviria</taxon>
        <taxon>Orthornavirae</taxon>
        <taxon>Negarnaviricota</taxon>
        <taxon>Polyploviricotina</taxon>
        <taxon>Insthoviricetes</taxon>
        <taxon>Articulavirales</taxon>
        <taxon>Orthomyxoviridae</taxon>
        <taxon>Alphainfluenzavirus</taxon>
        <taxon>Alphainfluenzavirus influenzae</taxon>
        <taxon>Influenza A virus</taxon>
    </lineage>
</organism>
<keyword id="KW-0025">Alternative splicing</keyword>
<keyword id="KW-1262">Eukaryotic host gene expression shutoff by virus</keyword>
<keyword id="KW-1035">Host cytoplasm</keyword>
<keyword id="KW-1190">Host gene expression shutoff by virus</keyword>
<keyword id="KW-1192">Host mRNA suppression by virus</keyword>
<keyword id="KW-1048">Host nucleus</keyword>
<keyword id="KW-0945">Host-virus interaction</keyword>
<keyword id="KW-1090">Inhibition of host innate immune response by virus</keyword>
<keyword id="KW-1114">Inhibition of host interferon signaling pathway by virus</keyword>
<keyword id="KW-1102">Inhibition of host PKR by virus</keyword>
<keyword id="KW-1103">Inhibition of host pre-mRNA processing by virus</keyword>
<keyword id="KW-1088">Inhibition of host RIG-I by virus</keyword>
<keyword id="KW-1113">Inhibition of host RLR pathway by virus</keyword>
<keyword id="KW-0922">Interferon antiviral system evasion</keyword>
<keyword id="KW-0694">RNA-binding</keyword>
<keyword id="KW-0832">Ubl conjugation</keyword>
<keyword id="KW-0899">Viral immunoevasion</keyword>